<name>L2DTL_DROME</name>
<dbReference type="EMBL" id="X83414">
    <property type="protein sequence ID" value="CAA58441.1"/>
    <property type="molecule type" value="Genomic_DNA"/>
</dbReference>
<dbReference type="EMBL" id="X98094">
    <property type="protein sequence ID" value="CAA66723.1"/>
    <property type="molecule type" value="Genomic_DNA"/>
</dbReference>
<dbReference type="EMBL" id="AE013599">
    <property type="protein sequence ID" value="AAF47049.1"/>
    <property type="molecule type" value="Genomic_DNA"/>
</dbReference>
<dbReference type="EMBL" id="AY121647">
    <property type="protein sequence ID" value="AAM51974.1"/>
    <property type="molecule type" value="mRNA"/>
</dbReference>
<dbReference type="PIR" id="S51748">
    <property type="entry name" value="S51748"/>
</dbReference>
<dbReference type="RefSeq" id="NP_524871.1">
    <molecule id="Q24371-1"/>
    <property type="nucleotide sequence ID" value="NM_080132.3"/>
</dbReference>
<dbReference type="SMR" id="Q24371"/>
<dbReference type="BioGRID" id="70176">
    <property type="interactions" value="4"/>
</dbReference>
<dbReference type="FunCoup" id="Q24371">
    <property type="interactions" value="776"/>
</dbReference>
<dbReference type="IntAct" id="Q24371">
    <property type="interactions" value="4"/>
</dbReference>
<dbReference type="STRING" id="7227.FBpp0071994"/>
<dbReference type="GlyGen" id="Q24371">
    <property type="glycosylation" value="1 site"/>
</dbReference>
<dbReference type="iPTMnet" id="Q24371"/>
<dbReference type="PaxDb" id="7227-FBpp0071994"/>
<dbReference type="DNASU" id="46326"/>
<dbReference type="EnsemblMetazoa" id="FBtr0072085">
    <molecule id="Q24371-1"/>
    <property type="protein sequence ID" value="FBpp0071994"/>
    <property type="gene ID" value="FBgn0013548"/>
</dbReference>
<dbReference type="GeneID" id="46326"/>
<dbReference type="KEGG" id="dme:Dmel_CG11295"/>
<dbReference type="UCSC" id="CG11295-RA">
    <molecule id="Q24371-1"/>
    <property type="organism name" value="d. melanogaster"/>
</dbReference>
<dbReference type="AGR" id="FB:FBgn0013548"/>
<dbReference type="FlyBase" id="FBgn0013548">
    <property type="gene designation" value="l(2)dtl"/>
</dbReference>
<dbReference type="VEuPathDB" id="VectorBase:FBgn0013548"/>
<dbReference type="eggNOG" id="KOG0321">
    <property type="taxonomic scope" value="Eukaryota"/>
</dbReference>
<dbReference type="GeneTree" id="ENSGT00530000064210"/>
<dbReference type="HOGENOM" id="CLU_023407_1_0_1"/>
<dbReference type="InParanoid" id="Q24371"/>
<dbReference type="OMA" id="HTVEVTC"/>
<dbReference type="OrthoDB" id="2096344at2759"/>
<dbReference type="PhylomeDB" id="Q24371"/>
<dbReference type="Reactome" id="R-DME-110314">
    <property type="pathway name" value="Recognition of DNA damage by PCNA-containing replication complex"/>
</dbReference>
<dbReference type="Reactome" id="R-DME-8951664">
    <property type="pathway name" value="Neddylation"/>
</dbReference>
<dbReference type="SignaLink" id="Q24371"/>
<dbReference type="UniPathway" id="UPA00143"/>
<dbReference type="BioGRID-ORCS" id="46326">
    <property type="hits" value="0 hits in 1 CRISPR screen"/>
</dbReference>
<dbReference type="GenomeRNAi" id="46326"/>
<dbReference type="PRO" id="PR:Q24371"/>
<dbReference type="Proteomes" id="UP000000803">
    <property type="component" value="Chromosome 2R"/>
</dbReference>
<dbReference type="Bgee" id="FBgn0013548">
    <property type="expression patterns" value="Expressed in secondary oocyte and 26 other cell types or tissues"/>
</dbReference>
<dbReference type="GO" id="GO:0005737">
    <property type="term" value="C:cytoplasm"/>
    <property type="evidence" value="ECO:0007669"/>
    <property type="project" value="UniProtKB-SubCell"/>
</dbReference>
<dbReference type="GO" id="GO:0005634">
    <property type="term" value="C:nucleus"/>
    <property type="evidence" value="ECO:0000314"/>
    <property type="project" value="FlyBase"/>
</dbReference>
<dbReference type="GO" id="GO:0030674">
    <property type="term" value="F:protein-macromolecule adaptor activity"/>
    <property type="evidence" value="ECO:0000318"/>
    <property type="project" value="GO_Central"/>
</dbReference>
<dbReference type="GO" id="GO:0007095">
    <property type="term" value="P:mitotic G2 DNA damage checkpoint signaling"/>
    <property type="evidence" value="ECO:0000318"/>
    <property type="project" value="GO_Central"/>
</dbReference>
<dbReference type="GO" id="GO:0043161">
    <property type="term" value="P:proteasome-mediated ubiquitin-dependent protein catabolic process"/>
    <property type="evidence" value="ECO:0000318"/>
    <property type="project" value="GO_Central"/>
</dbReference>
<dbReference type="GO" id="GO:0016567">
    <property type="term" value="P:protein ubiquitination"/>
    <property type="evidence" value="ECO:0007669"/>
    <property type="project" value="UniProtKB-UniPathway"/>
</dbReference>
<dbReference type="FunFam" id="2.130.10.10:FF:001593">
    <property type="entry name" value="protein lethal(2)denticleless"/>
    <property type="match status" value="1"/>
</dbReference>
<dbReference type="Gene3D" id="2.130.10.10">
    <property type="entry name" value="YVTN repeat-like/Quinoprotein amine dehydrogenase"/>
    <property type="match status" value="2"/>
</dbReference>
<dbReference type="InterPro" id="IPR020472">
    <property type="entry name" value="G-protein_beta_WD-40_rep"/>
</dbReference>
<dbReference type="InterPro" id="IPR051865">
    <property type="entry name" value="WD-repeat_CDT2_adapter"/>
</dbReference>
<dbReference type="InterPro" id="IPR015943">
    <property type="entry name" value="WD40/YVTN_repeat-like_dom_sf"/>
</dbReference>
<dbReference type="InterPro" id="IPR019775">
    <property type="entry name" value="WD40_repeat_CS"/>
</dbReference>
<dbReference type="InterPro" id="IPR036322">
    <property type="entry name" value="WD40_repeat_dom_sf"/>
</dbReference>
<dbReference type="InterPro" id="IPR001680">
    <property type="entry name" value="WD40_rpt"/>
</dbReference>
<dbReference type="PANTHER" id="PTHR22852:SF0">
    <property type="entry name" value="DENTICLELESS PROTEIN HOMOLOG"/>
    <property type="match status" value="1"/>
</dbReference>
<dbReference type="PANTHER" id="PTHR22852">
    <property type="entry name" value="LETHAL 2 DENTICLELESS PROTEIN RETINOIC ACID-REGULATED NUCLEAR MATRIX-ASSOCIATED PROTEIN"/>
    <property type="match status" value="1"/>
</dbReference>
<dbReference type="Pfam" id="PF00400">
    <property type="entry name" value="WD40"/>
    <property type="match status" value="5"/>
</dbReference>
<dbReference type="PRINTS" id="PR00320">
    <property type="entry name" value="GPROTEINBRPT"/>
</dbReference>
<dbReference type="SMART" id="SM00320">
    <property type="entry name" value="WD40"/>
    <property type="match status" value="6"/>
</dbReference>
<dbReference type="SUPFAM" id="SSF50978">
    <property type="entry name" value="WD40 repeat-like"/>
    <property type="match status" value="1"/>
</dbReference>
<dbReference type="PROSITE" id="PS00678">
    <property type="entry name" value="WD_REPEATS_1"/>
    <property type="match status" value="1"/>
</dbReference>
<dbReference type="PROSITE" id="PS50082">
    <property type="entry name" value="WD_REPEATS_2"/>
    <property type="match status" value="5"/>
</dbReference>
<dbReference type="PROSITE" id="PS50294">
    <property type="entry name" value="WD_REPEATS_REGION"/>
    <property type="match status" value="1"/>
</dbReference>
<feature type="chain" id="PRO_0000051057" description="Protein lethal(2)denticleless">
    <location>
        <begin position="1"/>
        <end position="769"/>
    </location>
</feature>
<feature type="repeat" description="WD 1">
    <location>
        <begin position="99"/>
        <end position="129"/>
    </location>
</feature>
<feature type="repeat" description="WD 2">
    <location>
        <begin position="143"/>
        <end position="174"/>
    </location>
</feature>
<feature type="repeat" description="WD 3">
    <location>
        <begin position="194"/>
        <end position="249"/>
    </location>
</feature>
<feature type="repeat" description="WD 4">
    <location>
        <begin position="264"/>
        <end position="303"/>
    </location>
</feature>
<feature type="repeat" description="WD 5">
    <location>
        <begin position="320"/>
        <end position="349"/>
    </location>
</feature>
<feature type="repeat" description="WD 6">
    <location>
        <begin position="362"/>
        <end position="393"/>
    </location>
</feature>
<feature type="region of interest" description="Disordered" evidence="1">
    <location>
        <begin position="196"/>
        <end position="221"/>
    </location>
</feature>
<feature type="region of interest" description="Disordered" evidence="1">
    <location>
        <begin position="448"/>
        <end position="467"/>
    </location>
</feature>
<feature type="region of interest" description="Disordered" evidence="1">
    <location>
        <begin position="476"/>
        <end position="562"/>
    </location>
</feature>
<feature type="region of interest" description="Disordered" evidence="1">
    <location>
        <begin position="655"/>
        <end position="769"/>
    </location>
</feature>
<feature type="compositionally biased region" description="Polar residues" evidence="1">
    <location>
        <begin position="503"/>
        <end position="518"/>
    </location>
</feature>
<feature type="compositionally biased region" description="Basic and acidic residues" evidence="1">
    <location>
        <begin position="524"/>
        <end position="533"/>
    </location>
</feature>
<feature type="compositionally biased region" description="Polar residues" evidence="1">
    <location>
        <begin position="546"/>
        <end position="562"/>
    </location>
</feature>
<feature type="compositionally biased region" description="Polar residues" evidence="1">
    <location>
        <begin position="657"/>
        <end position="666"/>
    </location>
</feature>
<feature type="compositionally biased region" description="Low complexity" evidence="1">
    <location>
        <begin position="689"/>
        <end position="704"/>
    </location>
</feature>
<feature type="compositionally biased region" description="Polar residues" evidence="1">
    <location>
        <begin position="705"/>
        <end position="714"/>
    </location>
</feature>
<feature type="compositionally biased region" description="Low complexity" evidence="1">
    <location>
        <begin position="728"/>
        <end position="743"/>
    </location>
</feature>
<feature type="compositionally biased region" description="Polar residues" evidence="1">
    <location>
        <begin position="758"/>
        <end position="769"/>
    </location>
</feature>
<feature type="modified residue" description="Phosphothreonine" evidence="3">
    <location>
        <position position="201"/>
    </location>
</feature>
<feature type="modified residue" description="Phosphoserine" evidence="3">
    <location>
        <position position="204"/>
    </location>
</feature>
<feature type="modified residue" description="Phosphothreonine" evidence="3">
    <location>
        <position position="456"/>
    </location>
</feature>
<feature type="modified residue" description="Phosphoserine" evidence="3">
    <location>
        <position position="459"/>
    </location>
</feature>
<feature type="modified residue" description="Phosphoserine" evidence="3">
    <location>
        <position position="524"/>
    </location>
</feature>
<feature type="modified residue" description="Phosphoserine" evidence="2">
    <location>
        <position position="655"/>
    </location>
</feature>
<feature type="modified residue" description="Phosphoserine" evidence="3">
    <location>
        <position position="679"/>
    </location>
</feature>
<feature type="modified residue" description="Phosphoserine" evidence="3">
    <location>
        <position position="691"/>
    </location>
</feature>
<feature type="modified residue" description="Phosphoserine" evidence="3">
    <location>
        <position position="711"/>
    </location>
</feature>
<feature type="splice variant" id="VSP_015188" description="In isoform 2." evidence="5">
    <original>MNIYNKLRAREHGYGNERTYDFALRRLS</original>
    <variation>MATAMRGPTTSPCAAFP</variation>
    <location>
        <begin position="1"/>
        <end position="28"/>
    </location>
</feature>
<feature type="sequence conflict" description="In Ref. 1; CAA58441 and 2; CAA66723." evidence="5" ref="1 2">
    <original>Q</original>
    <variation>P</variation>
    <location>
        <position position="309"/>
    </location>
</feature>
<reference key="1">
    <citation type="journal article" date="1996" name="Gene">
        <title>Identification of a novel Drosophila melanogaster heat-shock gene, lethal(2)denticleless [l(2)dtl], coding for an 83-kDa protein.</title>
        <authorList>
            <person name="Kurzik-Dumke U."/>
            <person name="Neubauer M."/>
            <person name="Debes A."/>
        </authorList>
    </citation>
    <scope>NUCLEOTIDE SEQUENCE [GENOMIC DNA] (ISOFORM 2)</scope>
    <source>
        <strain>Oregon-R</strain>
    </source>
</reference>
<reference key="2">
    <citation type="submission" date="1996-05" db="EMBL/GenBank/DDBJ databases">
        <title>Sequence of a 10291 nt genomic region of Drosophila melanogaster harbouring the genes l(2)tid, l(2)not, l(2)rot, and l(2)dtl.</title>
        <authorList>
            <person name="Gunacker S."/>
            <person name="Neubhuer M."/>
            <person name="Kurzik-Dumke U."/>
        </authorList>
    </citation>
    <scope>NUCLEOTIDE SEQUENCE [GENOMIC DNA] (ISOFORM 2)</scope>
    <source>
        <strain>Oregon-2</strain>
    </source>
</reference>
<reference key="3">
    <citation type="journal article" date="2000" name="Science">
        <title>The genome sequence of Drosophila melanogaster.</title>
        <authorList>
            <person name="Adams M.D."/>
            <person name="Celniker S.E."/>
            <person name="Holt R.A."/>
            <person name="Evans C.A."/>
            <person name="Gocayne J.D."/>
            <person name="Amanatides P.G."/>
            <person name="Scherer S.E."/>
            <person name="Li P.W."/>
            <person name="Hoskins R.A."/>
            <person name="Galle R.F."/>
            <person name="George R.A."/>
            <person name="Lewis S.E."/>
            <person name="Richards S."/>
            <person name="Ashburner M."/>
            <person name="Henderson S.N."/>
            <person name="Sutton G.G."/>
            <person name="Wortman J.R."/>
            <person name="Yandell M.D."/>
            <person name="Zhang Q."/>
            <person name="Chen L.X."/>
            <person name="Brandon R.C."/>
            <person name="Rogers Y.-H.C."/>
            <person name="Blazej R.G."/>
            <person name="Champe M."/>
            <person name="Pfeiffer B.D."/>
            <person name="Wan K.H."/>
            <person name="Doyle C."/>
            <person name="Baxter E.G."/>
            <person name="Helt G."/>
            <person name="Nelson C.R."/>
            <person name="Miklos G.L.G."/>
            <person name="Abril J.F."/>
            <person name="Agbayani A."/>
            <person name="An H.-J."/>
            <person name="Andrews-Pfannkoch C."/>
            <person name="Baldwin D."/>
            <person name="Ballew R.M."/>
            <person name="Basu A."/>
            <person name="Baxendale J."/>
            <person name="Bayraktaroglu L."/>
            <person name="Beasley E.M."/>
            <person name="Beeson K.Y."/>
            <person name="Benos P.V."/>
            <person name="Berman B.P."/>
            <person name="Bhandari D."/>
            <person name="Bolshakov S."/>
            <person name="Borkova D."/>
            <person name="Botchan M.R."/>
            <person name="Bouck J."/>
            <person name="Brokstein P."/>
            <person name="Brottier P."/>
            <person name="Burtis K.C."/>
            <person name="Busam D.A."/>
            <person name="Butler H."/>
            <person name="Cadieu E."/>
            <person name="Center A."/>
            <person name="Chandra I."/>
            <person name="Cherry J.M."/>
            <person name="Cawley S."/>
            <person name="Dahlke C."/>
            <person name="Davenport L.B."/>
            <person name="Davies P."/>
            <person name="de Pablos B."/>
            <person name="Delcher A."/>
            <person name="Deng Z."/>
            <person name="Mays A.D."/>
            <person name="Dew I."/>
            <person name="Dietz S.M."/>
            <person name="Dodson K."/>
            <person name="Doup L.E."/>
            <person name="Downes M."/>
            <person name="Dugan-Rocha S."/>
            <person name="Dunkov B.C."/>
            <person name="Dunn P."/>
            <person name="Durbin K.J."/>
            <person name="Evangelista C.C."/>
            <person name="Ferraz C."/>
            <person name="Ferriera S."/>
            <person name="Fleischmann W."/>
            <person name="Fosler C."/>
            <person name="Gabrielian A.E."/>
            <person name="Garg N.S."/>
            <person name="Gelbart W.M."/>
            <person name="Glasser K."/>
            <person name="Glodek A."/>
            <person name="Gong F."/>
            <person name="Gorrell J.H."/>
            <person name="Gu Z."/>
            <person name="Guan P."/>
            <person name="Harris M."/>
            <person name="Harris N.L."/>
            <person name="Harvey D.A."/>
            <person name="Heiman T.J."/>
            <person name="Hernandez J.R."/>
            <person name="Houck J."/>
            <person name="Hostin D."/>
            <person name="Houston K.A."/>
            <person name="Howland T.J."/>
            <person name="Wei M.-H."/>
            <person name="Ibegwam C."/>
            <person name="Jalali M."/>
            <person name="Kalush F."/>
            <person name="Karpen G.H."/>
            <person name="Ke Z."/>
            <person name="Kennison J.A."/>
            <person name="Ketchum K.A."/>
            <person name="Kimmel B.E."/>
            <person name="Kodira C.D."/>
            <person name="Kraft C.L."/>
            <person name="Kravitz S."/>
            <person name="Kulp D."/>
            <person name="Lai Z."/>
            <person name="Lasko P."/>
            <person name="Lei Y."/>
            <person name="Levitsky A.A."/>
            <person name="Li J.H."/>
            <person name="Li Z."/>
            <person name="Liang Y."/>
            <person name="Lin X."/>
            <person name="Liu X."/>
            <person name="Mattei B."/>
            <person name="McIntosh T.C."/>
            <person name="McLeod M.P."/>
            <person name="McPherson D."/>
            <person name="Merkulov G."/>
            <person name="Milshina N.V."/>
            <person name="Mobarry C."/>
            <person name="Morris J."/>
            <person name="Moshrefi A."/>
            <person name="Mount S.M."/>
            <person name="Moy M."/>
            <person name="Murphy B."/>
            <person name="Murphy L."/>
            <person name="Muzny D.M."/>
            <person name="Nelson D.L."/>
            <person name="Nelson D.R."/>
            <person name="Nelson K.A."/>
            <person name="Nixon K."/>
            <person name="Nusskern D.R."/>
            <person name="Pacleb J.M."/>
            <person name="Palazzolo M."/>
            <person name="Pittman G.S."/>
            <person name="Pan S."/>
            <person name="Pollard J."/>
            <person name="Puri V."/>
            <person name="Reese M.G."/>
            <person name="Reinert K."/>
            <person name="Remington K."/>
            <person name="Saunders R.D.C."/>
            <person name="Scheeler F."/>
            <person name="Shen H."/>
            <person name="Shue B.C."/>
            <person name="Siden-Kiamos I."/>
            <person name="Simpson M."/>
            <person name="Skupski M.P."/>
            <person name="Smith T.J."/>
            <person name="Spier E."/>
            <person name="Spradling A.C."/>
            <person name="Stapleton M."/>
            <person name="Strong R."/>
            <person name="Sun E."/>
            <person name="Svirskas R."/>
            <person name="Tector C."/>
            <person name="Turner R."/>
            <person name="Venter E."/>
            <person name="Wang A.H."/>
            <person name="Wang X."/>
            <person name="Wang Z.-Y."/>
            <person name="Wassarman D.A."/>
            <person name="Weinstock G.M."/>
            <person name="Weissenbach J."/>
            <person name="Williams S.M."/>
            <person name="Woodage T."/>
            <person name="Worley K.C."/>
            <person name="Wu D."/>
            <person name="Yang S."/>
            <person name="Yao Q.A."/>
            <person name="Ye J."/>
            <person name="Yeh R.-F."/>
            <person name="Zaveri J.S."/>
            <person name="Zhan M."/>
            <person name="Zhang G."/>
            <person name="Zhao Q."/>
            <person name="Zheng L."/>
            <person name="Zheng X.H."/>
            <person name="Zhong F.N."/>
            <person name="Zhong W."/>
            <person name="Zhou X."/>
            <person name="Zhu S.C."/>
            <person name="Zhu X."/>
            <person name="Smith H.O."/>
            <person name="Gibbs R.A."/>
            <person name="Myers E.W."/>
            <person name="Rubin G.M."/>
            <person name="Venter J.C."/>
        </authorList>
    </citation>
    <scope>NUCLEOTIDE SEQUENCE [LARGE SCALE GENOMIC DNA]</scope>
    <source>
        <strain>Berkeley</strain>
    </source>
</reference>
<reference key="4">
    <citation type="journal article" date="2002" name="Genome Biol.">
        <title>Annotation of the Drosophila melanogaster euchromatic genome: a systematic review.</title>
        <authorList>
            <person name="Misra S."/>
            <person name="Crosby M.A."/>
            <person name="Mungall C.J."/>
            <person name="Matthews B.B."/>
            <person name="Campbell K.S."/>
            <person name="Hradecky P."/>
            <person name="Huang Y."/>
            <person name="Kaminker J.S."/>
            <person name="Millburn G.H."/>
            <person name="Prochnik S.E."/>
            <person name="Smith C.D."/>
            <person name="Tupy J.L."/>
            <person name="Whitfield E.J."/>
            <person name="Bayraktaroglu L."/>
            <person name="Berman B.P."/>
            <person name="Bettencourt B.R."/>
            <person name="Celniker S.E."/>
            <person name="de Grey A.D.N.J."/>
            <person name="Drysdale R.A."/>
            <person name="Harris N.L."/>
            <person name="Richter J."/>
            <person name="Russo S."/>
            <person name="Schroeder A.J."/>
            <person name="Shu S.Q."/>
            <person name="Stapleton M."/>
            <person name="Yamada C."/>
            <person name="Ashburner M."/>
            <person name="Gelbart W.M."/>
            <person name="Rubin G.M."/>
            <person name="Lewis S.E."/>
        </authorList>
    </citation>
    <scope>GENOME REANNOTATION</scope>
    <source>
        <strain>Berkeley</strain>
    </source>
</reference>
<reference key="5">
    <citation type="journal article" date="2002" name="Genome Biol.">
        <title>A Drosophila full-length cDNA resource.</title>
        <authorList>
            <person name="Stapleton M."/>
            <person name="Carlson J.W."/>
            <person name="Brokstein P."/>
            <person name="Yu C."/>
            <person name="Champe M."/>
            <person name="George R.A."/>
            <person name="Guarin H."/>
            <person name="Kronmiller B."/>
            <person name="Pacleb J.M."/>
            <person name="Park S."/>
            <person name="Wan K.H."/>
            <person name="Rubin G.M."/>
            <person name="Celniker S.E."/>
        </authorList>
    </citation>
    <scope>NUCLEOTIDE SEQUENCE [LARGE SCALE MRNA] (ISOFORM 1)</scope>
    <source>
        <strain>Berkeley</strain>
        <tissue>Embryo</tissue>
    </source>
</reference>
<reference key="6">
    <citation type="journal article" date="2007" name="Mol. Biosyst.">
        <title>An integrated chemical, mass spectrometric and computational strategy for (quantitative) phosphoproteomics: application to Drosophila melanogaster Kc167 cells.</title>
        <authorList>
            <person name="Bodenmiller B."/>
            <person name="Mueller L.N."/>
            <person name="Pedrioli P.G.A."/>
            <person name="Pflieger D."/>
            <person name="Juenger M.A."/>
            <person name="Eng J.K."/>
            <person name="Aebersold R."/>
            <person name="Tao W.A."/>
        </authorList>
    </citation>
    <scope>PHOSPHORYLATION [LARGE SCALE ANALYSIS] AT SER-655</scope>
    <scope>IDENTIFICATION BY MASS SPECTROMETRY</scope>
</reference>
<reference key="7">
    <citation type="journal article" date="2008" name="Dev. Cell">
        <title>Intrinsic negative cell cycle regulation provided by PIP box- and Cul4Cdt2-mediated destruction of E2f1 during S phase.</title>
        <authorList>
            <person name="Shibutani S.T."/>
            <person name="de la Cruz A.F."/>
            <person name="Tran V."/>
            <person name="Turbyfill W.J. III"/>
            <person name="Reis T."/>
            <person name="Edgar B.A."/>
            <person name="Duronio R.J."/>
        </authorList>
    </citation>
    <scope>FUNCTION</scope>
</reference>
<reference key="8">
    <citation type="journal article" date="2008" name="J. Proteome Res.">
        <title>Phosphoproteome analysis of Drosophila melanogaster embryos.</title>
        <authorList>
            <person name="Zhai B."/>
            <person name="Villen J."/>
            <person name="Beausoleil S.A."/>
            <person name="Mintseris J."/>
            <person name="Gygi S.P."/>
        </authorList>
    </citation>
    <scope>PHOSPHORYLATION [LARGE SCALE ANALYSIS] AT THR-201; SER-204; THR-456; SER-459; SER-524; SER-679; SER-691 AND SER-711</scope>
    <scope>IDENTIFICATION BY MASS SPECTROMETRY</scope>
    <source>
        <tissue>Embryo</tissue>
    </source>
</reference>
<protein>
    <recommendedName>
        <fullName>Protein lethal(2)denticleless</fullName>
    </recommendedName>
    <alternativeName>
        <fullName>Protein DTL83</fullName>
    </alternativeName>
</protein>
<evidence type="ECO:0000256" key="1">
    <source>
        <dbReference type="SAM" id="MobiDB-lite"/>
    </source>
</evidence>
<evidence type="ECO:0000269" key="2">
    <source>
    </source>
</evidence>
<evidence type="ECO:0000269" key="3">
    <source>
    </source>
</evidence>
<evidence type="ECO:0000269" key="4">
    <source>
    </source>
</evidence>
<evidence type="ECO:0000305" key="5"/>
<proteinExistence type="evidence at protein level"/>
<sequence length="769" mass="84118">MNIYNKLRAREHGYGNERTYDFALRRLSVAKEDSWRGIAPANYCPDFNPEPPIFSAKFANCDGYRHILAIANEDGKITLQDTTQRNHQPEEQSLVGPQCHFNAVFDLEWAPGQMRFVSASGDHTARLWEVAGSGIRGLNSYVGHTRSVKSAAFKRTDPAVFATGGRDGAILIWDIRANLNMDLTSRVDNCIYSGHTGGPGTPVSQRKQRTRTPKMAGGTTSSSITGLAFQDNDTLISCGAGDGVIKVWDLRRNYTAYKKEPLPRHKLPYAGSSTFRGFTNLIVDASGTRLYANCMDNTIYCYNLASYSQRPLACYKGLLNSTFYIKSCLSPDGKYLLSGSSDERAYIWNLDHAEEPLVALAGHTVEVTCVAWGSSHDCPIVTCSDDARHKIWRIGPDLDGLSEAERAEKYRGTASYVREFGKKAFGPSSGNHKYNLRDLESTPRSLKRLMDQNERTPGSVEKTTTKRSFLEMLGVAGQETEATEQPQKRAKPLESRGRRLFGPSSQETACRHIQLQSINEEDASPSKRQKENSAAEDVSPLHKLLSTPSHSPLSENVNHVYTSPPTTSAAAAAVAADALNPPPISAAIYSPTSNLPNYVLDGEAPHLGIMSPKRKAKEKVDWLTNIRKQKLMSGRAHVTLSEKISEEQQADVLASPRLQSLRQSECSPRIHASPRRRISHTDGGGGTPAGSSSHSHSQSQPKTPTSSRRNSETTLLRFFSIQRSSSVPAEETTTTNAAPSSSDPHPPAVTAPAATPLSMRTPTTAVGSD</sequence>
<gene>
    <name type="primary">l(2)dtl</name>
    <name type="synonym">DTL83</name>
    <name type="ORF">CG11295</name>
</gene>
<comment type="function">
    <text evidence="4">Substrate-specific adapter of a DCX (DDB1-CUL4-X-box) E3 ubiquitin-protein ligase complex required for cell cycle control. The DCX(DTL) complex, also named CRL4(CDT2) complex, mediates the polyubiquitination and subsequent degradation of E2f during S phase. E2f degradation is necessary to ensure proper development. Substrates require their interaction with PCNA for their polyubiquitination: substrates interact with PCNA via their PIP-box, leading to recruit the DCX(DTL) complex.</text>
</comment>
<comment type="pathway">
    <text>Protein modification; protein ubiquitination.</text>
</comment>
<comment type="subunit">
    <text>Component of the DCX(DTL) E3 ubiquitin ligase complex, at least composed of Cul-4, pic/DDB1, l(2)dtl/CDT2 and Roc1a.</text>
</comment>
<comment type="subcellular location">
    <subcellularLocation>
        <location evidence="5">Cytoplasm</location>
    </subcellularLocation>
</comment>
<comment type="alternative products">
    <event type="alternative splicing"/>
    <isoform>
        <id>Q24371-1</id>
        <name>1</name>
        <sequence type="displayed"/>
    </isoform>
    <isoform>
        <id>Q24371-2</id>
        <name>2</name>
        <sequence type="described" ref="VSP_015188"/>
    </isoform>
</comment>
<comment type="tissue specificity">
    <text>Ubiquitously expressed during embryogenesis with no sign of tissue specificity in expression up to stage 17.</text>
</comment>
<comment type="developmental stage">
    <text>Detected at all developmental stages. The extremely high level of transcription detected in the early embryo and in adults is caused by maternal message.</text>
</comment>
<comment type="induction">
    <text>By heat shock.</text>
</comment>
<comment type="similarity">
    <text evidence="5">Belongs to the WD repeat cdt2 family.</text>
</comment>
<organism>
    <name type="scientific">Drosophila melanogaster</name>
    <name type="common">Fruit fly</name>
    <dbReference type="NCBI Taxonomy" id="7227"/>
    <lineage>
        <taxon>Eukaryota</taxon>
        <taxon>Metazoa</taxon>
        <taxon>Ecdysozoa</taxon>
        <taxon>Arthropoda</taxon>
        <taxon>Hexapoda</taxon>
        <taxon>Insecta</taxon>
        <taxon>Pterygota</taxon>
        <taxon>Neoptera</taxon>
        <taxon>Endopterygota</taxon>
        <taxon>Diptera</taxon>
        <taxon>Brachycera</taxon>
        <taxon>Muscomorpha</taxon>
        <taxon>Ephydroidea</taxon>
        <taxon>Drosophilidae</taxon>
        <taxon>Drosophila</taxon>
        <taxon>Sophophora</taxon>
    </lineage>
</organism>
<accession>Q24371</accession>
<accession>Q9W1K9</accession>
<keyword id="KW-0025">Alternative splicing</keyword>
<keyword id="KW-0131">Cell cycle</keyword>
<keyword id="KW-0963">Cytoplasm</keyword>
<keyword id="KW-0597">Phosphoprotein</keyword>
<keyword id="KW-1185">Reference proteome</keyword>
<keyword id="KW-0677">Repeat</keyword>
<keyword id="KW-0346">Stress response</keyword>
<keyword id="KW-0833">Ubl conjugation pathway</keyword>
<keyword id="KW-0853">WD repeat</keyword>